<dbReference type="EC" id="2.1.1.37" evidence="3"/>
<dbReference type="EMBL" id="X51515">
    <property type="protein sequence ID" value="CAA35888.1"/>
    <property type="molecule type" value="Genomic_DNA"/>
</dbReference>
<dbReference type="PIR" id="S09247">
    <property type="entry name" value="CTBSFI"/>
</dbReference>
<dbReference type="SMR" id="P17044"/>
<dbReference type="REBASE" id="203788">
    <property type="entry name" value="M.Bsu1444ORF756P"/>
</dbReference>
<dbReference type="REBASE" id="203791">
    <property type="entry name" value="M.Bsu757ORF755P"/>
</dbReference>
<dbReference type="REBASE" id="205274">
    <property type="entry name" value="M.Bsu761ORF757P"/>
</dbReference>
<dbReference type="REBASE" id="205287">
    <property type="entry name" value="M.Bsu333ORF764P"/>
</dbReference>
<dbReference type="REBASE" id="257163">
    <property type="entry name" value="M.Ssp9304ORF3154P"/>
</dbReference>
<dbReference type="REBASE" id="3338">
    <property type="entry name" value="M.BsuFI"/>
</dbReference>
<dbReference type="PRO" id="PR:P17044"/>
<dbReference type="GO" id="GO:0003886">
    <property type="term" value="F:DNA (cytosine-5-)-methyltransferase activity"/>
    <property type="evidence" value="ECO:0007669"/>
    <property type="project" value="UniProtKB-EC"/>
</dbReference>
<dbReference type="GO" id="GO:0003677">
    <property type="term" value="F:DNA binding"/>
    <property type="evidence" value="ECO:0007669"/>
    <property type="project" value="UniProtKB-KW"/>
</dbReference>
<dbReference type="GO" id="GO:0009307">
    <property type="term" value="P:DNA restriction-modification system"/>
    <property type="evidence" value="ECO:0007669"/>
    <property type="project" value="UniProtKB-KW"/>
</dbReference>
<dbReference type="GO" id="GO:0032259">
    <property type="term" value="P:methylation"/>
    <property type="evidence" value="ECO:0007669"/>
    <property type="project" value="UniProtKB-KW"/>
</dbReference>
<dbReference type="CDD" id="cd00315">
    <property type="entry name" value="Cyt_C5_DNA_methylase"/>
    <property type="match status" value="1"/>
</dbReference>
<dbReference type="Gene3D" id="3.90.120.10">
    <property type="entry name" value="DNA Methylase, subunit A, domain 2"/>
    <property type="match status" value="1"/>
</dbReference>
<dbReference type="Gene3D" id="3.40.50.150">
    <property type="entry name" value="Vaccinia Virus protein VP39"/>
    <property type="match status" value="1"/>
</dbReference>
<dbReference type="InterPro" id="IPR050750">
    <property type="entry name" value="C5-MTase"/>
</dbReference>
<dbReference type="InterPro" id="IPR018117">
    <property type="entry name" value="C5_DNA_meth_AS"/>
</dbReference>
<dbReference type="InterPro" id="IPR001525">
    <property type="entry name" value="C5_MeTfrase"/>
</dbReference>
<dbReference type="InterPro" id="IPR031303">
    <property type="entry name" value="C5_meth_CS"/>
</dbReference>
<dbReference type="InterPro" id="IPR029063">
    <property type="entry name" value="SAM-dependent_MTases_sf"/>
</dbReference>
<dbReference type="NCBIfam" id="TIGR00675">
    <property type="entry name" value="dcm"/>
    <property type="match status" value="1"/>
</dbReference>
<dbReference type="PANTHER" id="PTHR46098">
    <property type="entry name" value="TRNA (CYTOSINE(38)-C(5))-METHYLTRANSFERASE"/>
    <property type="match status" value="1"/>
</dbReference>
<dbReference type="PANTHER" id="PTHR46098:SF1">
    <property type="entry name" value="TRNA (CYTOSINE(38)-C(5))-METHYLTRANSFERASE"/>
    <property type="match status" value="1"/>
</dbReference>
<dbReference type="Pfam" id="PF00145">
    <property type="entry name" value="DNA_methylase"/>
    <property type="match status" value="1"/>
</dbReference>
<dbReference type="PRINTS" id="PR00105">
    <property type="entry name" value="C5METTRFRASE"/>
</dbReference>
<dbReference type="SUPFAM" id="SSF53335">
    <property type="entry name" value="S-adenosyl-L-methionine-dependent methyltransferases"/>
    <property type="match status" value="1"/>
</dbReference>
<dbReference type="PROSITE" id="PS00094">
    <property type="entry name" value="C5_MTASE_1"/>
    <property type="match status" value="1"/>
</dbReference>
<dbReference type="PROSITE" id="PS00095">
    <property type="entry name" value="C5_MTASE_2"/>
    <property type="match status" value="1"/>
</dbReference>
<dbReference type="PROSITE" id="PS51679">
    <property type="entry name" value="SAM_MT_C5"/>
    <property type="match status" value="1"/>
</dbReference>
<proteinExistence type="evidence at protein level"/>
<protein>
    <recommendedName>
        <fullName evidence="4">Type II methyltransferase M.BsuFI</fullName>
        <shortName evidence="5">M.BsuFI</shortName>
        <ecNumber evidence="3">2.1.1.37</ecNumber>
    </recommendedName>
    <alternativeName>
        <fullName>Cytosine-specific methyltransferase BsuFI</fullName>
    </alternativeName>
    <alternativeName>
        <fullName>Modification methylase BsuFI</fullName>
    </alternativeName>
</protein>
<organism>
    <name type="scientific">Bacillus subtilis</name>
    <dbReference type="NCBI Taxonomy" id="1423"/>
    <lineage>
        <taxon>Bacteria</taxon>
        <taxon>Bacillati</taxon>
        <taxon>Bacillota</taxon>
        <taxon>Bacilli</taxon>
        <taxon>Bacillales</taxon>
        <taxon>Bacillaceae</taxon>
        <taxon>Bacillus</taxon>
    </lineage>
</organism>
<accession>P17044</accession>
<sequence length="409" mass="46911">MRGGNRLGAGRKVIPESEKKKRKSVYITDKLYTRIMDTDIENCNNFSQKCMALIELAMENLNKNNQEHSVKRNNILMVRDTKSTYNKTNNNFEKQNRGIKLTFIDLFAGIGGIRLGFEDKYTKCVFSSEWDKYAAQTYEANYGEKPHGDITKINENDIPDQDVLLAGFPCQPFSNIGKREGFAHERRNIIFDVLRILKKKQPKMFLLENVKGLLTNDNGNTFRVILDNLKSLGYSVFYEVMDAQNFGLPQRRERIVIVGFHPDLGINDFSFPKGNPDNKVPINAILEHNPTGYSISKRLQESYLFKKDDGKPQIVDFRCTYQVNTLVASYHKIQRLTGTFVKDGETGLRLFSELELKRLMGFPVDFKVPVSRTQMYRQFGNSVAVPMIKAVAGAMKERLLLAEMQVLKK</sequence>
<name>MTBF_BACIU</name>
<comment type="function">
    <text evidence="3 4">A methylase, recognizes the double-stranded sequence 5'-CCGG-3', methylates C-1 on both strands, and protects the DNA from cleavage by the BsuFI endonuclease.</text>
</comment>
<comment type="catalytic activity">
    <reaction evidence="2 3">
        <text>a 2'-deoxycytidine in DNA + S-adenosyl-L-methionine = a 5-methyl-2'-deoxycytidine in DNA + S-adenosyl-L-homocysteine + H(+)</text>
        <dbReference type="Rhea" id="RHEA:13681"/>
        <dbReference type="Rhea" id="RHEA-COMP:11369"/>
        <dbReference type="Rhea" id="RHEA-COMP:11370"/>
        <dbReference type="ChEBI" id="CHEBI:15378"/>
        <dbReference type="ChEBI" id="CHEBI:57856"/>
        <dbReference type="ChEBI" id="CHEBI:59789"/>
        <dbReference type="ChEBI" id="CHEBI:85452"/>
        <dbReference type="ChEBI" id="CHEBI:85454"/>
        <dbReference type="EC" id="2.1.1.37"/>
    </reaction>
</comment>
<comment type="similarity">
    <text evidence="1">Belongs to the class I-like SAM-binding methyltransferase superfamily. C5-methyltransferase family.</text>
</comment>
<feature type="chain" id="PRO_0000087863" description="Type II methyltransferase M.BsuFI">
    <location>
        <begin position="1"/>
        <end position="409"/>
    </location>
</feature>
<feature type="domain" description="SAM-dependent MTase C5-type" evidence="1">
    <location>
        <begin position="101"/>
        <end position="402"/>
    </location>
</feature>
<feature type="active site" evidence="1 2">
    <location>
        <position position="170"/>
    </location>
</feature>
<keyword id="KW-0238">DNA-binding</keyword>
<keyword id="KW-0489">Methyltransferase</keyword>
<keyword id="KW-0680">Restriction system</keyword>
<keyword id="KW-0949">S-adenosyl-L-methionine</keyword>
<keyword id="KW-0808">Transferase</keyword>
<evidence type="ECO:0000255" key="1">
    <source>
        <dbReference type="PROSITE-ProRule" id="PRU01016"/>
    </source>
</evidence>
<evidence type="ECO:0000255" key="2">
    <source>
        <dbReference type="PROSITE-ProRule" id="PRU10018"/>
    </source>
</evidence>
<evidence type="ECO:0000269" key="3">
    <source>
    </source>
</evidence>
<evidence type="ECO:0000303" key="4">
    <source>
    </source>
</evidence>
<evidence type="ECO:0000303" key="5">
    <source>
    </source>
</evidence>
<gene>
    <name type="primary">hsdFM</name>
    <name evidence="5" type="synonym">hsmFI</name>
</gene>
<reference key="1">
    <citation type="journal article" date="1990" name="EMBO J.">
        <title>The amino acid sequence of the CCGG recognizing DNA methyltransferase M.BsuFI: implications for the analysis of sequence recognition by cytosine DNA methyltransferases.</title>
        <authorList>
            <person name="Walter J."/>
            <person name="Noyer-Weidner M."/>
            <person name="Trautner T.A."/>
        </authorList>
    </citation>
    <scope>NUCLEOTIDE SEQUENCE [GENOMIC DNA]</scope>
    <scope>FUNCTION</scope>
    <scope>CATALYTIC ACTIVITY</scope>
    <source>
        <strain>ISF18</strain>
    </source>
</reference>
<reference key="2">
    <citation type="journal article" date="2003" name="Nucleic Acids Res.">
        <title>A nomenclature for restriction enzymes, DNA methyltransferases, homing endonucleases and their genes.</title>
        <authorList>
            <person name="Roberts R.J."/>
            <person name="Belfort M."/>
            <person name="Bestor T."/>
            <person name="Bhagwat A.S."/>
            <person name="Bickle T.A."/>
            <person name="Bitinaite J."/>
            <person name="Blumenthal R.M."/>
            <person name="Degtyarev S.K."/>
            <person name="Dryden D.T."/>
            <person name="Dybvig K."/>
            <person name="Firman K."/>
            <person name="Gromova E.S."/>
            <person name="Gumport R.I."/>
            <person name="Halford S.E."/>
            <person name="Hattman S."/>
            <person name="Heitman J."/>
            <person name="Hornby D.P."/>
            <person name="Janulaitis A."/>
            <person name="Jeltsch A."/>
            <person name="Josephsen J."/>
            <person name="Kiss A."/>
            <person name="Klaenhammer T.R."/>
            <person name="Kobayashi I."/>
            <person name="Kong H."/>
            <person name="Krueger D.H."/>
            <person name="Lacks S."/>
            <person name="Marinus M.G."/>
            <person name="Miyahara M."/>
            <person name="Morgan R.D."/>
            <person name="Murray N.E."/>
            <person name="Nagaraja V."/>
            <person name="Piekarowicz A."/>
            <person name="Pingoud A."/>
            <person name="Raleigh E."/>
            <person name="Rao D.N."/>
            <person name="Reich N."/>
            <person name="Repin V.E."/>
            <person name="Selker E.U."/>
            <person name="Shaw P.C."/>
            <person name="Stein D.C."/>
            <person name="Stoddard B.L."/>
            <person name="Szybalski W."/>
            <person name="Trautner T.A."/>
            <person name="Van Etten J.L."/>
            <person name="Vitor J.M."/>
            <person name="Wilson G.G."/>
            <person name="Xu S.Y."/>
        </authorList>
    </citation>
    <scope>NOMENCLATURE</scope>
</reference>